<evidence type="ECO:0000256" key="1">
    <source>
        <dbReference type="SAM" id="MobiDB-lite"/>
    </source>
</evidence>
<evidence type="ECO:0000269" key="2">
    <source>
    </source>
</evidence>
<evidence type="ECO:0000269" key="3">
    <source>
    </source>
</evidence>
<evidence type="ECO:0000269" key="4">
    <source>
    </source>
</evidence>
<evidence type="ECO:0000269" key="5">
    <source>
    </source>
</evidence>
<evidence type="ECO:0000269" key="6">
    <source>
    </source>
</evidence>
<evidence type="ECO:0000269" key="7">
    <source>
    </source>
</evidence>
<evidence type="ECO:0000269" key="8">
    <source>
    </source>
</evidence>
<evidence type="ECO:0000269" key="9">
    <source>
    </source>
</evidence>
<evidence type="ECO:0000303" key="10">
    <source>
    </source>
</evidence>
<evidence type="ECO:0000303" key="11">
    <source ref="2"/>
</evidence>
<evidence type="ECO:0000305" key="12"/>
<evidence type="ECO:0007744" key="13">
    <source>
    </source>
</evidence>
<evidence type="ECO:0007744" key="14">
    <source>
    </source>
</evidence>
<protein>
    <recommendedName>
        <fullName evidence="12">Actin remodeling regulator NHS</fullName>
    </recommendedName>
    <alternativeName>
        <fullName>Congenital cataracts and dental anomalies protein</fullName>
    </alternativeName>
    <alternativeName>
        <fullName>Nance-Horan syndrome protein</fullName>
    </alternativeName>
</protein>
<accession>Q6T4R5</accession>
<accession>B7ZVX8</accession>
<accession>E2DH69</accession>
<accession>Q5J7Q0</accession>
<accession>Q5J7Q1</accession>
<accession>Q68DR5</accession>
<keyword id="KW-0025">Alternative splicing</keyword>
<keyword id="KW-0898">Cataract</keyword>
<keyword id="KW-0965">Cell junction</keyword>
<keyword id="KW-1003">Cell membrane</keyword>
<keyword id="KW-0966">Cell projection</keyword>
<keyword id="KW-0963">Cytoplasm</keyword>
<keyword id="KW-0472">Membrane</keyword>
<keyword id="KW-0597">Phosphoprotein</keyword>
<keyword id="KW-1267">Proteomics identification</keyword>
<keyword id="KW-1185">Reference proteome</keyword>
<keyword id="KW-0796">Tight junction</keyword>
<feature type="chain" id="PRO_0000096810" description="Actin remodeling regulator NHS">
    <location>
        <begin position="1"/>
        <end position="1651"/>
    </location>
</feature>
<feature type="region of interest" description="WAVE homology domain (WHD)">
    <location>
        <begin position="1"/>
        <end position="262"/>
    </location>
</feature>
<feature type="region of interest" description="Disordered" evidence="1">
    <location>
        <begin position="1"/>
        <end position="104"/>
    </location>
</feature>
<feature type="region of interest" description="Disordered" evidence="1">
    <location>
        <begin position="235"/>
        <end position="274"/>
    </location>
</feature>
<feature type="region of interest" description="Disordered" evidence="1">
    <location>
        <begin position="288"/>
        <end position="314"/>
    </location>
</feature>
<feature type="region of interest" description="Disordered" evidence="1">
    <location>
        <begin position="494"/>
        <end position="598"/>
    </location>
</feature>
<feature type="region of interest" description="Disordered" evidence="1">
    <location>
        <begin position="620"/>
        <end position="669"/>
    </location>
</feature>
<feature type="region of interest" description="Disordered" evidence="1">
    <location>
        <begin position="835"/>
        <end position="888"/>
    </location>
</feature>
<feature type="region of interest" description="Disordered" evidence="1">
    <location>
        <begin position="980"/>
        <end position="1004"/>
    </location>
</feature>
<feature type="region of interest" description="Disordered" evidence="1">
    <location>
        <begin position="1017"/>
        <end position="1071"/>
    </location>
</feature>
<feature type="region of interest" description="Disordered" evidence="1">
    <location>
        <begin position="1383"/>
        <end position="1436"/>
    </location>
</feature>
<feature type="region of interest" description="Disordered" evidence="1">
    <location>
        <begin position="1454"/>
        <end position="1509"/>
    </location>
</feature>
<feature type="region of interest" description="Disordered" evidence="1">
    <location>
        <begin position="1526"/>
        <end position="1651"/>
    </location>
</feature>
<feature type="compositionally biased region" description="Pro residues" evidence="1">
    <location>
        <begin position="65"/>
        <end position="76"/>
    </location>
</feature>
<feature type="compositionally biased region" description="Basic and acidic residues" evidence="1">
    <location>
        <begin position="507"/>
        <end position="521"/>
    </location>
</feature>
<feature type="compositionally biased region" description="Polar residues" evidence="1">
    <location>
        <begin position="548"/>
        <end position="558"/>
    </location>
</feature>
<feature type="compositionally biased region" description="Low complexity" evidence="1">
    <location>
        <begin position="629"/>
        <end position="648"/>
    </location>
</feature>
<feature type="compositionally biased region" description="Polar residues" evidence="1">
    <location>
        <begin position="657"/>
        <end position="669"/>
    </location>
</feature>
<feature type="compositionally biased region" description="Basic and acidic residues" evidence="1">
    <location>
        <begin position="859"/>
        <end position="874"/>
    </location>
</feature>
<feature type="compositionally biased region" description="Low complexity" evidence="1">
    <location>
        <begin position="980"/>
        <end position="993"/>
    </location>
</feature>
<feature type="compositionally biased region" description="Polar residues" evidence="1">
    <location>
        <begin position="1020"/>
        <end position="1037"/>
    </location>
</feature>
<feature type="compositionally biased region" description="Low complexity" evidence="1">
    <location>
        <begin position="1408"/>
        <end position="1423"/>
    </location>
</feature>
<feature type="compositionally biased region" description="Low complexity" evidence="1">
    <location>
        <begin position="1465"/>
        <end position="1496"/>
    </location>
</feature>
<feature type="compositionally biased region" description="Polar residues" evidence="1">
    <location>
        <begin position="1555"/>
        <end position="1568"/>
    </location>
</feature>
<feature type="compositionally biased region" description="Low complexity" evidence="1">
    <location>
        <begin position="1588"/>
        <end position="1618"/>
    </location>
</feature>
<feature type="compositionally biased region" description="Basic and acidic residues" evidence="1">
    <location>
        <begin position="1640"/>
        <end position="1651"/>
    </location>
</feature>
<feature type="modified residue" description="Phosphothreonine" evidence="14">
    <location>
        <position position="332"/>
    </location>
</feature>
<feature type="modified residue" description="Phosphothreonine" evidence="13 14">
    <location>
        <position position="401"/>
    </location>
</feature>
<feature type="modified residue" description="Phosphoserine" evidence="14">
    <location>
        <position position="415"/>
    </location>
</feature>
<feature type="modified residue" description="Phosphoserine" evidence="14">
    <location>
        <position position="533"/>
    </location>
</feature>
<feature type="modified residue" description="Phosphoserine" evidence="14">
    <location>
        <position position="739"/>
    </location>
</feature>
<feature type="modified residue" description="Phosphoserine" evidence="13">
    <location>
        <position position="1176"/>
    </location>
</feature>
<feature type="modified residue" description="Phosphothreonine" evidence="13">
    <location>
        <position position="1262"/>
    </location>
</feature>
<feature type="modified residue" description="Phosphoserine" evidence="13">
    <location>
        <position position="1329"/>
    </location>
</feature>
<feature type="modified residue" description="Phosphoserine" evidence="13">
    <location>
        <position position="1499"/>
    </location>
</feature>
<feature type="splice variant" id="VSP_046537" description="In isoform 3." evidence="11">
    <original>MPFAKRIVEPQW</original>
    <variation>MALACCMPKNAA</variation>
    <location>
        <begin position="1"/>
        <end position="12"/>
    </location>
</feature>
<feature type="splice variant" id="VSP_046538" description="In isoform 4." evidence="11">
    <original>MPFAKRIVEPQ</original>
    <variation>MDNALFLCLAA</variation>
    <location>
        <begin position="1"/>
        <end position="11"/>
    </location>
</feature>
<feature type="splice variant" id="VSP_046539" description="In isoform 4." evidence="11">
    <location>
        <position position="12"/>
    </location>
</feature>
<feature type="splice variant" id="VSP_046540" description="In isoform 3 and isoform 4." evidence="11">
    <location>
        <begin position="13"/>
        <end position="189"/>
    </location>
</feature>
<feature type="splice variant" id="VSP_046541" description="In isoform 2." evidence="10">
    <location>
        <begin position="285"/>
        <end position="305"/>
    </location>
</feature>
<feature type="sequence variant" id="VAR_076438" description="In dbSNP:rs753449273." evidence="9">
    <original>R</original>
    <variation>C</variation>
    <location>
        <position position="583"/>
    </location>
</feature>
<feature type="sequence variant" id="VAR_036225" description="In a breast cancer sample; somatic mutation; dbSNP:rs149609550." evidence="4">
    <original>A</original>
    <variation>T</variation>
    <location>
        <position position="865"/>
    </location>
</feature>
<feature type="sequence variant" id="VAR_021527" description="In dbSNP:rs3747295.">
    <original>F</original>
    <variation>L</variation>
    <location>
        <position position="1340"/>
    </location>
</feature>
<feature type="sequence variant" id="VAR_051234" description="In dbSNP:rs2071848.">
    <original>S</original>
    <variation>T</variation>
    <location>
        <position position="1531"/>
    </location>
</feature>
<feature type="sequence variant" id="VAR_021528" description="In dbSNP:rs2071848.">
    <original>S</original>
    <variation>T</variation>
    <location>
        <position position="1556"/>
    </location>
</feature>
<feature type="sequence variant" id="VAR_076261" evidence="8">
    <original>A</original>
    <variation>P</variation>
    <location>
        <position position="1628"/>
    </location>
</feature>
<feature type="sequence conflict" description="In Ref. 1; ADN85614." evidence="12" ref="1">
    <original>K</original>
    <variation>KQ</variation>
    <location>
        <position position="305"/>
    </location>
</feature>
<sequence>MPFAKRIVEPQWLCRQRRPAPGPAVDASGGSAEPPPPLQPPGRRDLDEVEAPGPEEPARAVPAPSGLPPPPPPLPAPADQTQPPHGEASVAGEESTAGIPEAAPAAGEASSAAAAAAVLLMLDLCAVSNAALARVLRQLSDVARHACSLFQELESDIQLTHRRVWALQGKLGGVQRVLSTLDPKQEAVPVSNLDIESKLSVYYRAPWHQQRNIFLPATRPPCVEELHRHARQSLQALRREHRSRSDRREQRAAAPLSIAAPPLPAYPPAHSQRRREFKDRHFLTFNSTRSPSPTECCHMTPWSRKSHPPEDEDTDVMLGQRPKNPIHNIPSTLDKQTNWSKALPLPTPEEKMKQDAQVISSCIIPINVTGVGFDREASIRCSLVHSQSVLQRRRKLRRRKTISGIPRRVQQEIDSDESPVARERNVIVHTNPDPSNTVNRISGTRDSECQTEDILIAAPSRRRIRAQRGQSIAASLSHSAGNISALADKGDTMFTPAVSSRTRSRSLPREGNRGGDAEPKVGAKPSAYEEGESFVGDHERTPNDFSEAPSSPSAQDHQPTLGLACSQHLHSPQHKLSERGRSRLSRMAADSGSCDISSNSDTFGSPIHCISTAGVLLSSHMDQKDDHQSSSGNWSGSSSTCPSQTSETIPPAASPPLTGSSHCDSELSLNTAPHANEDASVFVTEQYNDHLDKVRGHRANSFTSTVADLLDDPNNSNTSDSEWNYLHHHHDASCRQDFSPERPKADSLGCPSFTSMATYDSFLEKSPSDKADTSSHFSVDTEGYYTSMHFDCGLKGNKSYVCHYAALGPENGQGVGASPGLPDCAWQDYLDHKRQGRPSISFRKPKAKPTPPKRSSSLRKSDGNADISEKKEPKISSGQHLPHSSREMKLPLDFANTPSRMENANLPTKQEPSWINQSEQGIKEPQLDASDIPPFKDEVAESTHYADLWLLNDLKTNDPYRSLSNSSTATGTTVIECIKSPESSESQTSQSESRATTPSLPSVDNEFKLASPEKLAGLASPSSGYSSQSETPTSSFPTAFFSGPLSPGGSKRKPKVPERKSSLQQPSLKDGTISLSKDLELPIIPPTHLDLSALHNVLNKPFHHRHPLHVFTHNKQNTVGETLRSNPPPSLAITPTILKSVNLRSINKSEEVKQKEENNTDLPYLEESTLTTAALSPSKIRPHTANKSVSRQYSTEDTILSFLDSSAVEMGPDKLHLEKNSTFDVKNRCDPETITSAGSSLLDSNVTKDQVRTETEPIPENTPTKNCAFPTEGFQRVSAARPNDLDGKIIQYGPGPDETLEQVQKAPSAGLEEVAQPESVDVITSQSDSPTRATDVSNQFKHQFVMSRHHDKVPGTISYESEITSVNSFPEKCSKQENIASGISAKSASDNSKAEETQGNVDEASLKESSPSDDSIISPLSEDSQAEAEGVFVSPNKPRTTEDLFAVIHRSKRKVLGRKDSGDMSVRSKSRAPLSSSSSSASSITSPSSNVTTPNSQRSPGLIYRNAKKSNTSNEEFKLLLLKKGSRSDSSYRMSATEILKSPILPKPPGELTAESPQSTDDAHQGSQGAEALSPLSPCSPRVNAEGFSSKSFATSASARVGRSRAPPAASSSRYSVRCRLYNTPMQAISEGETENSDGSPHDDRSSQSST</sequence>
<comment type="function">
    <text evidence="7">May function in cell morphology by maintaining the integrity of the circumferential actin ring and controlling lamellipod formation. Involved in the regulation eye, tooth, brain and craniofacial development.</text>
</comment>
<comment type="subunit">
    <text evidence="6 7">Interacts with the tight junction protein TJP1/ZO-1. Associates with actin-rich structures. Interacts with BRK1 and with all three members of the WAVE protein family, WASF1, WASF2 and WASF3.</text>
</comment>
<comment type="subcellular location">
    <molecule>Isoform 1</molecule>
    <subcellularLocation>
        <location>Apical cell membrane</location>
        <topology>Peripheral membrane protein</topology>
    </subcellularLocation>
    <subcellularLocation>
        <location>Cell projection</location>
        <location>Lamellipodium</location>
    </subcellularLocation>
    <subcellularLocation>
        <location>Cell junction</location>
        <location>Tight junction</location>
    </subcellularLocation>
    <subcellularLocation>
        <location>Cell junction</location>
        <location>Focal adhesion</location>
    </subcellularLocation>
    <text>Colocalizes with the tight junction protein TJP1 in epithelial cells. Localizes to the leading edge of lamellipodia in motile cells.</text>
</comment>
<comment type="subcellular location">
    <molecule>Isoform 3</molecule>
    <subcellularLocation>
        <location>Cytoplasm</location>
    </subcellularLocation>
</comment>
<comment type="alternative products">
    <event type="alternative splicing"/>
    <isoform>
        <id>Q6T4R5-1</id>
        <name>1</name>
        <name>NHS-A</name>
        <sequence type="displayed"/>
    </isoform>
    <isoform>
        <id>Q6T4R5-2</id>
        <name>2</name>
        <sequence type="described" ref="VSP_046541"/>
    </isoform>
    <isoform>
        <id>Q6T4R5-3</id>
        <name>3</name>
        <name>NHS-1A</name>
        <sequence type="described" ref="VSP_046537 VSP_046540"/>
    </isoform>
    <isoform>
        <id>Q6T4R5-4</id>
        <name>4</name>
        <sequence type="described" ref="VSP_046538 VSP_046539 VSP_046540"/>
    </isoform>
</comment>
<comment type="tissue specificity">
    <text evidence="2 3">Detected at low levels in all tissues analyzed. Detected in fetal and adult brain, lens, retina, retinal pigment epithelium, placenta, lymphocytes and fibroblasts. Levels in retinal pigment epithelium, placenta, lymphocytes, and fibroblasts are very low. Expressed also in kidney, lung and thymus.</text>
</comment>
<comment type="disease" evidence="2 3">
    <disease id="DI-02027">
        <name>Nance-Horan syndrome</name>
        <acronym>NHS</acronym>
        <description>Rare X-linked disorder characterized by congenital cataracts, dental anomalies, dysmorphic features, and, in some cases, intellectual disability. Distinctive dental anomalies are seen in affected males, including supernumerary incisors and crown shaped permanent teeth. Characteristic facial features are anteverted pinnae, long face, and prominent nasal bridge and nose. Carrier females display milder variable symptoms of disease with lens opacities often involving the posterior Y sutures, and on occasion dental anomalies and the characteristic facial features described.</description>
        <dbReference type="MIM" id="302350"/>
    </disease>
    <text>The disease is caused by variants affecting the gene represented in this entry.</text>
</comment>
<comment type="disease" evidence="5">
    <disease id="DI-02922">
        <name>Cataract 40</name>
        <acronym>CTRCT40</acronym>
        <description>An opacification of the crystalline lens of the eye that frequently results in visual impairment or blindness. Opacities vary in morphology, are often confined to a portion of the lens, and may be static or progressive. CTRCT40 manifests as a congenital nuclear opacity with severe visual impairment in affected males. Heterozygous females have suture cataracts and only slight reduction in vision. In some cases, cataract is associated with microcornea without any other systemic anomaly or dysmorphism. Microcornea is defined by a corneal diameter inferior to 10 mm in both meridians in an otherwise normal eye.</description>
        <dbReference type="MIM" id="302200"/>
    </disease>
    <text>The disease is caused by variants affecting the gene represented in this entry. Caused by copy number variations predicted to result in altered transcriptional regulation of the NHS gene: a 0.8 Mb segmental duplication-triplication encompassing the NHS, SCML1 and RAI2 genes, and an 4.8 kb intragenic deletion in NHS intron 1.</text>
</comment>
<comment type="similarity">
    <text evidence="12">Belongs to the NHS family.</text>
</comment>
<dbReference type="EMBL" id="AY436752">
    <property type="protein sequence ID" value="AAR03104.1"/>
    <property type="molecule type" value="mRNA"/>
</dbReference>
<dbReference type="EMBL" id="AY456993">
    <property type="protein sequence ID" value="AAS13456.1"/>
    <property type="molecule type" value="mRNA"/>
</dbReference>
<dbReference type="EMBL" id="AY456992">
    <property type="protein sequence ID" value="AAS13455.1"/>
    <property type="molecule type" value="mRNA"/>
</dbReference>
<dbReference type="EMBL" id="GQ988776">
    <property type="protein sequence ID" value="ADN85614.1"/>
    <property type="molecule type" value="mRNA"/>
</dbReference>
<dbReference type="EMBL" id="AL845433">
    <property type="status" value="NOT_ANNOTATED_CDS"/>
    <property type="molecule type" value="Genomic_DNA"/>
</dbReference>
<dbReference type="EMBL" id="Z93242">
    <property type="status" value="NOT_ANNOTATED_CDS"/>
    <property type="molecule type" value="Genomic_DNA"/>
</dbReference>
<dbReference type="EMBL" id="BC136415">
    <property type="protein sequence ID" value="AAI36416.1"/>
    <property type="molecule type" value="mRNA"/>
</dbReference>
<dbReference type="EMBL" id="BC171763">
    <property type="protein sequence ID" value="AAI71763.1"/>
    <property type="molecule type" value="mRNA"/>
</dbReference>
<dbReference type="EMBL" id="CR749300">
    <property type="protein sequence ID" value="CAH18155.1"/>
    <property type="molecule type" value="mRNA"/>
</dbReference>
<dbReference type="CCDS" id="CCDS14181.1">
    <molecule id="Q6T4R5-2"/>
</dbReference>
<dbReference type="CCDS" id="CCDS48087.1">
    <molecule id="Q6T4R5-3"/>
</dbReference>
<dbReference type="CCDS" id="CCDS94562.1">
    <molecule id="Q6T4R5-1"/>
</dbReference>
<dbReference type="RefSeq" id="NP_001129496.1">
    <molecule id="Q6T4R5-3"/>
    <property type="nucleotide sequence ID" value="NM_001136024.4"/>
</dbReference>
<dbReference type="RefSeq" id="NP_001278796.1">
    <molecule id="Q6T4R5-1"/>
    <property type="nucleotide sequence ID" value="NM_001291867.2"/>
</dbReference>
<dbReference type="RefSeq" id="NP_001278797.1">
    <property type="nucleotide sequence ID" value="NM_001291868.1"/>
</dbReference>
<dbReference type="RefSeq" id="NP_938011.1">
    <molecule id="Q6T4R5-2"/>
    <property type="nucleotide sequence ID" value="NM_198270.4"/>
</dbReference>
<dbReference type="BioGRID" id="110875">
    <property type="interactions" value="59"/>
</dbReference>
<dbReference type="ELM" id="Q6T4R5"/>
<dbReference type="FunCoup" id="Q6T4R5">
    <property type="interactions" value="572"/>
</dbReference>
<dbReference type="IntAct" id="Q6T4R5">
    <property type="interactions" value="32"/>
</dbReference>
<dbReference type="MINT" id="Q6T4R5"/>
<dbReference type="STRING" id="9606.ENSP00000369400"/>
<dbReference type="GlyGen" id="Q6T4R5">
    <property type="glycosylation" value="4 sites, 1 N-linked glycan (1 site), 1 O-linked glycan (1 site)"/>
</dbReference>
<dbReference type="iPTMnet" id="Q6T4R5"/>
<dbReference type="PhosphoSitePlus" id="Q6T4R5"/>
<dbReference type="BioMuta" id="NHS"/>
<dbReference type="DMDM" id="510120778"/>
<dbReference type="jPOST" id="Q6T4R5"/>
<dbReference type="MassIVE" id="Q6T4R5"/>
<dbReference type="PaxDb" id="9606-ENSP00000369400"/>
<dbReference type="PeptideAtlas" id="Q6T4R5"/>
<dbReference type="ProteomicsDB" id="67371">
    <molecule id="Q6T4R5-1"/>
</dbReference>
<dbReference type="ProteomicsDB" id="67372">
    <molecule id="Q6T4R5-2"/>
</dbReference>
<dbReference type="ProteomicsDB" id="67373">
    <molecule id="Q6T4R5-3"/>
</dbReference>
<dbReference type="Pumba" id="Q6T4R5"/>
<dbReference type="Antibodypedia" id="24084">
    <property type="antibodies" value="23 antibodies from 13 providers"/>
</dbReference>
<dbReference type="DNASU" id="4810"/>
<dbReference type="Ensembl" id="ENST00000380060.7">
    <molecule id="Q6T4R5-2"/>
    <property type="protein sequence ID" value="ENSP00000369400.3"/>
    <property type="gene ID" value="ENSG00000188158.17"/>
</dbReference>
<dbReference type="Ensembl" id="ENST00000398097.7">
    <molecule id="Q6T4R5-3"/>
    <property type="protein sequence ID" value="ENSP00000381170.3"/>
    <property type="gene ID" value="ENSG00000188158.17"/>
</dbReference>
<dbReference type="Ensembl" id="ENST00000676302.1">
    <molecule id="Q6T4R5-1"/>
    <property type="protein sequence ID" value="ENSP00000502262.1"/>
    <property type="gene ID" value="ENSG00000188158.17"/>
</dbReference>
<dbReference type="GeneID" id="4810"/>
<dbReference type="KEGG" id="hsa:4810"/>
<dbReference type="MANE-Select" id="ENST00000676302.1">
    <property type="protein sequence ID" value="ENSP00000502262.1"/>
    <property type="RefSeq nucleotide sequence ID" value="NM_001291867.2"/>
    <property type="RefSeq protein sequence ID" value="NP_001278796.1"/>
</dbReference>
<dbReference type="UCSC" id="uc004cxx.4">
    <molecule id="Q6T4R5-1"/>
    <property type="organism name" value="human"/>
</dbReference>
<dbReference type="AGR" id="HGNC:7820"/>
<dbReference type="CTD" id="4810"/>
<dbReference type="DisGeNET" id="4810"/>
<dbReference type="GeneCards" id="NHS"/>
<dbReference type="HGNC" id="HGNC:7820">
    <property type="gene designation" value="NHS"/>
</dbReference>
<dbReference type="HPA" id="ENSG00000188158">
    <property type="expression patterns" value="Low tissue specificity"/>
</dbReference>
<dbReference type="MalaCards" id="NHS"/>
<dbReference type="MIM" id="300457">
    <property type="type" value="gene"/>
</dbReference>
<dbReference type="MIM" id="302200">
    <property type="type" value="phenotype"/>
</dbReference>
<dbReference type="MIM" id="302350">
    <property type="type" value="phenotype"/>
</dbReference>
<dbReference type="neXtProt" id="NX_Q6T4R5"/>
<dbReference type="OpenTargets" id="ENSG00000188158"/>
<dbReference type="Orphanet" id="98991">
    <property type="disease" value="Early-onset nuclear cataract"/>
</dbReference>
<dbReference type="Orphanet" id="627">
    <property type="disease" value="Nance-Horan syndrome"/>
</dbReference>
<dbReference type="Orphanet" id="98994">
    <property type="disease" value="Total early-onset cataract"/>
</dbReference>
<dbReference type="PharmGKB" id="PA31622"/>
<dbReference type="VEuPathDB" id="HostDB:ENSG00000188158"/>
<dbReference type="eggNOG" id="ENOG502QSCT">
    <property type="taxonomic scope" value="Eukaryota"/>
</dbReference>
<dbReference type="GeneTree" id="ENSGT00950000182963"/>
<dbReference type="InParanoid" id="Q6T4R5"/>
<dbReference type="OMA" id="CAWPDYL"/>
<dbReference type="OrthoDB" id="8965057at2759"/>
<dbReference type="PAN-GO" id="Q6T4R5">
    <property type="GO annotations" value="2 GO annotations based on evolutionary models"/>
</dbReference>
<dbReference type="TreeFam" id="TF333323"/>
<dbReference type="PathwayCommons" id="Q6T4R5"/>
<dbReference type="Reactome" id="R-HSA-9013149">
    <property type="pathway name" value="RAC1 GTPase cycle"/>
</dbReference>
<dbReference type="Reactome" id="R-HSA-9013404">
    <property type="pathway name" value="RAC2 GTPase cycle"/>
</dbReference>
<dbReference type="Reactome" id="R-HSA-9013423">
    <property type="pathway name" value="RAC3 GTPase cycle"/>
</dbReference>
<dbReference type="SignaLink" id="Q6T4R5"/>
<dbReference type="SIGNOR" id="Q6T4R5"/>
<dbReference type="BioGRID-ORCS" id="4810">
    <property type="hits" value="15 hits in 769 CRISPR screens"/>
</dbReference>
<dbReference type="ChiTaRS" id="NHS">
    <property type="organism name" value="human"/>
</dbReference>
<dbReference type="GeneWiki" id="NHS_(gene)"/>
<dbReference type="GenomeRNAi" id="4810"/>
<dbReference type="Pharos" id="Q6T4R5">
    <property type="development level" value="Tbio"/>
</dbReference>
<dbReference type="PRO" id="PR:Q6T4R5"/>
<dbReference type="Proteomes" id="UP000005640">
    <property type="component" value="Chromosome X"/>
</dbReference>
<dbReference type="RNAct" id="Q6T4R5">
    <property type="molecule type" value="protein"/>
</dbReference>
<dbReference type="Bgee" id="ENSG00000188158">
    <property type="expression patterns" value="Expressed in oviduct epithelium and 152 other cell types or tissues"/>
</dbReference>
<dbReference type="ExpressionAtlas" id="Q6T4R5">
    <property type="expression patterns" value="baseline and differential"/>
</dbReference>
<dbReference type="GO" id="GO:0016324">
    <property type="term" value="C:apical plasma membrane"/>
    <property type="evidence" value="ECO:0007669"/>
    <property type="project" value="UniProtKB-SubCell"/>
</dbReference>
<dbReference type="GO" id="GO:0005923">
    <property type="term" value="C:bicellular tight junction"/>
    <property type="evidence" value="ECO:0007669"/>
    <property type="project" value="UniProtKB-SubCell"/>
</dbReference>
<dbReference type="GO" id="GO:0030054">
    <property type="term" value="C:cell junction"/>
    <property type="evidence" value="ECO:0000314"/>
    <property type="project" value="HPA"/>
</dbReference>
<dbReference type="GO" id="GO:0005925">
    <property type="term" value="C:focal adhesion"/>
    <property type="evidence" value="ECO:0007669"/>
    <property type="project" value="UniProtKB-SubCell"/>
</dbReference>
<dbReference type="GO" id="GO:0005794">
    <property type="term" value="C:Golgi apparatus"/>
    <property type="evidence" value="ECO:0000314"/>
    <property type="project" value="HPA"/>
</dbReference>
<dbReference type="GO" id="GO:0030027">
    <property type="term" value="C:lamellipodium"/>
    <property type="evidence" value="ECO:0007669"/>
    <property type="project" value="UniProtKB-SubCell"/>
</dbReference>
<dbReference type="GO" id="GO:0016604">
    <property type="term" value="C:nuclear body"/>
    <property type="evidence" value="ECO:0000314"/>
    <property type="project" value="HPA"/>
</dbReference>
<dbReference type="GO" id="GO:0030154">
    <property type="term" value="P:cell differentiation"/>
    <property type="evidence" value="ECO:0000318"/>
    <property type="project" value="GO_Central"/>
</dbReference>
<dbReference type="GO" id="GO:0002088">
    <property type="term" value="P:lens development in camera-type eye"/>
    <property type="evidence" value="ECO:0000318"/>
    <property type="project" value="GO_Central"/>
</dbReference>
<dbReference type="FunFam" id="1.20.5.340:FF:000039">
    <property type="entry name" value="Nance-Horan syndrome protein isoform X1"/>
    <property type="match status" value="1"/>
</dbReference>
<dbReference type="Gene3D" id="1.20.5.340">
    <property type="match status" value="1"/>
</dbReference>
<dbReference type="InterPro" id="IPR024845">
    <property type="entry name" value="NHS-like"/>
</dbReference>
<dbReference type="PANTHER" id="PTHR23039:SF5">
    <property type="entry name" value="ACTIN REMODELING REGULATOR NHS"/>
    <property type="match status" value="1"/>
</dbReference>
<dbReference type="PANTHER" id="PTHR23039">
    <property type="entry name" value="NANCE-HORAN SYNDROME PROTEIN"/>
    <property type="match status" value="1"/>
</dbReference>
<dbReference type="Pfam" id="PF15273">
    <property type="entry name" value="NHS"/>
    <property type="match status" value="1"/>
</dbReference>
<name>NHS_HUMAN</name>
<gene>
    <name type="primary">NHS</name>
</gene>
<reference key="1">
    <citation type="journal article" date="2003" name="Am. J. Hum. Genet.">
        <title>Mutations in a novel gene, NHS, cause the pleiotropic effects of Nance-Horan syndrome, including severe congenital cataract, dental anomalies, and mental retardation.</title>
        <authorList>
            <person name="Burdon K.P."/>
            <person name="McKay J.D."/>
            <person name="Sale M.M."/>
            <person name="Russell-Eggit I.M."/>
            <person name="Mackey D.A."/>
            <person name="Wirth M.G."/>
            <person name="Elder J.E."/>
            <person name="Nicoll A."/>
            <person name="Clark M.P."/>
            <person name="FitzGerald L.M."/>
            <person name="Stankovich J.M."/>
            <person name="Shaw M.A."/>
            <person name="Sharma S."/>
            <person name="Gajovic S."/>
            <person name="Gruss P."/>
            <person name="Ross S."/>
            <person name="Thomas P."/>
            <person name="Voss A.K."/>
            <person name="Thomas T."/>
            <person name="Gecz J."/>
            <person name="Craig J.E."/>
        </authorList>
    </citation>
    <scope>NUCLEOTIDE SEQUENCE [MRNA] (ISOFORM 2)</scope>
    <scope>TISSUE SPECIFICITY</scope>
    <scope>INVOLVEMENT IN NANCE-HORAN SYNDROME</scope>
</reference>
<reference key="2">
    <citation type="submission" date="2003-11" db="EMBL/GenBank/DDBJ databases">
        <title>Identification of the gene involved in Nance-Horan syndrome.</title>
        <authorList>
            <person name="Dessay B."/>
            <person name="Ronce N."/>
            <person name="Kaplan J."/>
            <person name="Hartsfield J.K."/>
            <person name="Wallgren-Pettersson C."/>
            <person name="Walpole I."/>
            <person name="Russo S."/>
            <person name="Chelly J."/>
            <person name="Moraine C."/>
            <person name="Toutain A."/>
        </authorList>
    </citation>
    <scope>NUCLEOTIDE SEQUENCE [MRNA] (ISOFORMS 3 AND 4)</scope>
</reference>
<reference key="3">
    <citation type="journal article" date="2006" name="Hum. Mol. Genet.">
        <title>Nance-Horan syndrome protein, NHS, associates with epithelial cell junctions.</title>
        <authorList>
            <person name="Sharma S."/>
            <person name="Ang S.L."/>
            <person name="Shaw M."/>
            <person name="Mackey D.A."/>
            <person name="Gecz J."/>
            <person name="McAvoy J.W."/>
            <person name="Craig J.E."/>
        </authorList>
    </citation>
    <scope>NUCLEOTIDE SEQUENCE [MRNA] (ISOFORM 1)</scope>
    <scope>SUBCELLULAR LOCATION</scope>
    <scope>ALTERNATIVE SPLICING</scope>
</reference>
<reference key="4">
    <citation type="journal article" date="2005" name="Nature">
        <title>The DNA sequence of the human X chromosome.</title>
        <authorList>
            <person name="Ross M.T."/>
            <person name="Grafham D.V."/>
            <person name="Coffey A.J."/>
            <person name="Scherer S."/>
            <person name="McLay K."/>
            <person name="Muzny D."/>
            <person name="Platzer M."/>
            <person name="Howell G.R."/>
            <person name="Burrows C."/>
            <person name="Bird C.P."/>
            <person name="Frankish A."/>
            <person name="Lovell F.L."/>
            <person name="Howe K.L."/>
            <person name="Ashurst J.L."/>
            <person name="Fulton R.S."/>
            <person name="Sudbrak R."/>
            <person name="Wen G."/>
            <person name="Jones M.C."/>
            <person name="Hurles M.E."/>
            <person name="Andrews T.D."/>
            <person name="Scott C.E."/>
            <person name="Searle S."/>
            <person name="Ramser J."/>
            <person name="Whittaker A."/>
            <person name="Deadman R."/>
            <person name="Carter N.P."/>
            <person name="Hunt S.E."/>
            <person name="Chen R."/>
            <person name="Cree A."/>
            <person name="Gunaratne P."/>
            <person name="Havlak P."/>
            <person name="Hodgson A."/>
            <person name="Metzker M.L."/>
            <person name="Richards S."/>
            <person name="Scott G."/>
            <person name="Steffen D."/>
            <person name="Sodergren E."/>
            <person name="Wheeler D.A."/>
            <person name="Worley K.C."/>
            <person name="Ainscough R."/>
            <person name="Ambrose K.D."/>
            <person name="Ansari-Lari M.A."/>
            <person name="Aradhya S."/>
            <person name="Ashwell R.I."/>
            <person name="Babbage A.K."/>
            <person name="Bagguley C.L."/>
            <person name="Ballabio A."/>
            <person name="Banerjee R."/>
            <person name="Barker G.E."/>
            <person name="Barlow K.F."/>
            <person name="Barrett I.P."/>
            <person name="Bates K.N."/>
            <person name="Beare D.M."/>
            <person name="Beasley H."/>
            <person name="Beasley O."/>
            <person name="Beck A."/>
            <person name="Bethel G."/>
            <person name="Blechschmidt K."/>
            <person name="Brady N."/>
            <person name="Bray-Allen S."/>
            <person name="Bridgeman A.M."/>
            <person name="Brown A.J."/>
            <person name="Brown M.J."/>
            <person name="Bonnin D."/>
            <person name="Bruford E.A."/>
            <person name="Buhay C."/>
            <person name="Burch P."/>
            <person name="Burford D."/>
            <person name="Burgess J."/>
            <person name="Burrill W."/>
            <person name="Burton J."/>
            <person name="Bye J.M."/>
            <person name="Carder C."/>
            <person name="Carrel L."/>
            <person name="Chako J."/>
            <person name="Chapman J.C."/>
            <person name="Chavez D."/>
            <person name="Chen E."/>
            <person name="Chen G."/>
            <person name="Chen Y."/>
            <person name="Chen Z."/>
            <person name="Chinault C."/>
            <person name="Ciccodicola A."/>
            <person name="Clark S.Y."/>
            <person name="Clarke G."/>
            <person name="Clee C.M."/>
            <person name="Clegg S."/>
            <person name="Clerc-Blankenburg K."/>
            <person name="Clifford K."/>
            <person name="Cobley V."/>
            <person name="Cole C.G."/>
            <person name="Conquer J.S."/>
            <person name="Corby N."/>
            <person name="Connor R.E."/>
            <person name="David R."/>
            <person name="Davies J."/>
            <person name="Davis C."/>
            <person name="Davis J."/>
            <person name="Delgado O."/>
            <person name="Deshazo D."/>
            <person name="Dhami P."/>
            <person name="Ding Y."/>
            <person name="Dinh H."/>
            <person name="Dodsworth S."/>
            <person name="Draper H."/>
            <person name="Dugan-Rocha S."/>
            <person name="Dunham A."/>
            <person name="Dunn M."/>
            <person name="Durbin K.J."/>
            <person name="Dutta I."/>
            <person name="Eades T."/>
            <person name="Ellwood M."/>
            <person name="Emery-Cohen A."/>
            <person name="Errington H."/>
            <person name="Evans K.L."/>
            <person name="Faulkner L."/>
            <person name="Francis F."/>
            <person name="Frankland J."/>
            <person name="Fraser A.E."/>
            <person name="Galgoczy P."/>
            <person name="Gilbert J."/>
            <person name="Gill R."/>
            <person name="Gloeckner G."/>
            <person name="Gregory S.G."/>
            <person name="Gribble S."/>
            <person name="Griffiths C."/>
            <person name="Grocock R."/>
            <person name="Gu Y."/>
            <person name="Gwilliam R."/>
            <person name="Hamilton C."/>
            <person name="Hart E.A."/>
            <person name="Hawes A."/>
            <person name="Heath P.D."/>
            <person name="Heitmann K."/>
            <person name="Hennig S."/>
            <person name="Hernandez J."/>
            <person name="Hinzmann B."/>
            <person name="Ho S."/>
            <person name="Hoffs M."/>
            <person name="Howden P.J."/>
            <person name="Huckle E.J."/>
            <person name="Hume J."/>
            <person name="Hunt P.J."/>
            <person name="Hunt A.R."/>
            <person name="Isherwood J."/>
            <person name="Jacob L."/>
            <person name="Johnson D."/>
            <person name="Jones S."/>
            <person name="de Jong P.J."/>
            <person name="Joseph S.S."/>
            <person name="Keenan S."/>
            <person name="Kelly S."/>
            <person name="Kershaw J.K."/>
            <person name="Khan Z."/>
            <person name="Kioschis P."/>
            <person name="Klages S."/>
            <person name="Knights A.J."/>
            <person name="Kosiura A."/>
            <person name="Kovar-Smith C."/>
            <person name="Laird G.K."/>
            <person name="Langford C."/>
            <person name="Lawlor S."/>
            <person name="Leversha M."/>
            <person name="Lewis L."/>
            <person name="Liu W."/>
            <person name="Lloyd C."/>
            <person name="Lloyd D.M."/>
            <person name="Loulseged H."/>
            <person name="Loveland J.E."/>
            <person name="Lovell J.D."/>
            <person name="Lozado R."/>
            <person name="Lu J."/>
            <person name="Lyne R."/>
            <person name="Ma J."/>
            <person name="Maheshwari M."/>
            <person name="Matthews L.H."/>
            <person name="McDowall J."/>
            <person name="McLaren S."/>
            <person name="McMurray A."/>
            <person name="Meidl P."/>
            <person name="Meitinger T."/>
            <person name="Milne S."/>
            <person name="Miner G."/>
            <person name="Mistry S.L."/>
            <person name="Morgan M."/>
            <person name="Morris S."/>
            <person name="Mueller I."/>
            <person name="Mullikin J.C."/>
            <person name="Nguyen N."/>
            <person name="Nordsiek G."/>
            <person name="Nyakatura G."/>
            <person name="O'dell C.N."/>
            <person name="Okwuonu G."/>
            <person name="Palmer S."/>
            <person name="Pandian R."/>
            <person name="Parker D."/>
            <person name="Parrish J."/>
            <person name="Pasternak S."/>
            <person name="Patel D."/>
            <person name="Pearce A.V."/>
            <person name="Pearson D.M."/>
            <person name="Pelan S.E."/>
            <person name="Perez L."/>
            <person name="Porter K.M."/>
            <person name="Ramsey Y."/>
            <person name="Reichwald K."/>
            <person name="Rhodes S."/>
            <person name="Ridler K.A."/>
            <person name="Schlessinger D."/>
            <person name="Schueler M.G."/>
            <person name="Sehra H.K."/>
            <person name="Shaw-Smith C."/>
            <person name="Shen H."/>
            <person name="Sheridan E.M."/>
            <person name="Shownkeen R."/>
            <person name="Skuce C.D."/>
            <person name="Smith M.L."/>
            <person name="Sotheran E.C."/>
            <person name="Steingruber H.E."/>
            <person name="Steward C.A."/>
            <person name="Storey R."/>
            <person name="Swann R.M."/>
            <person name="Swarbreck D."/>
            <person name="Tabor P.E."/>
            <person name="Taudien S."/>
            <person name="Taylor T."/>
            <person name="Teague B."/>
            <person name="Thomas K."/>
            <person name="Thorpe A."/>
            <person name="Timms K."/>
            <person name="Tracey A."/>
            <person name="Trevanion S."/>
            <person name="Tromans A.C."/>
            <person name="d'Urso M."/>
            <person name="Verduzco D."/>
            <person name="Villasana D."/>
            <person name="Waldron L."/>
            <person name="Wall M."/>
            <person name="Wang Q."/>
            <person name="Warren J."/>
            <person name="Warry G.L."/>
            <person name="Wei X."/>
            <person name="West A."/>
            <person name="Whitehead S.L."/>
            <person name="Whiteley M.N."/>
            <person name="Wilkinson J.E."/>
            <person name="Willey D.L."/>
            <person name="Williams G."/>
            <person name="Williams L."/>
            <person name="Williamson A."/>
            <person name="Williamson H."/>
            <person name="Wilming L."/>
            <person name="Woodmansey R.L."/>
            <person name="Wray P.W."/>
            <person name="Yen J."/>
            <person name="Zhang J."/>
            <person name="Zhou J."/>
            <person name="Zoghbi H."/>
            <person name="Zorilla S."/>
            <person name="Buck D."/>
            <person name="Reinhardt R."/>
            <person name="Poustka A."/>
            <person name="Rosenthal A."/>
            <person name="Lehrach H."/>
            <person name="Meindl A."/>
            <person name="Minx P.J."/>
            <person name="Hillier L.W."/>
            <person name="Willard H.F."/>
            <person name="Wilson R.K."/>
            <person name="Waterston R.H."/>
            <person name="Rice C.M."/>
            <person name="Vaudin M."/>
            <person name="Coulson A."/>
            <person name="Nelson D.L."/>
            <person name="Weinstock G."/>
            <person name="Sulston J.E."/>
            <person name="Durbin R.M."/>
            <person name="Hubbard T."/>
            <person name="Gibbs R.A."/>
            <person name="Beck S."/>
            <person name="Rogers J."/>
            <person name="Bentley D.R."/>
        </authorList>
    </citation>
    <scope>NUCLEOTIDE SEQUENCE [LARGE SCALE GENOMIC DNA]</scope>
</reference>
<reference key="5">
    <citation type="journal article" date="2004" name="Genome Res.">
        <title>The status, quality, and expansion of the NIH full-length cDNA project: the Mammalian Gene Collection (MGC).</title>
        <authorList>
            <consortium name="The MGC Project Team"/>
        </authorList>
    </citation>
    <scope>NUCLEOTIDE SEQUENCE [LARGE SCALE MRNA] (ISOFORM 1)</scope>
    <source>
        <tissue>Testis</tissue>
    </source>
</reference>
<reference key="6">
    <citation type="journal article" date="2007" name="BMC Genomics">
        <title>The full-ORF clone resource of the German cDNA consortium.</title>
        <authorList>
            <person name="Bechtel S."/>
            <person name="Rosenfelder H."/>
            <person name="Duda A."/>
            <person name="Schmidt C.P."/>
            <person name="Ernst U."/>
            <person name="Wellenreuther R."/>
            <person name="Mehrle A."/>
            <person name="Schuster C."/>
            <person name="Bahr A."/>
            <person name="Bloecker H."/>
            <person name="Heubner D."/>
            <person name="Hoerlein A."/>
            <person name="Michel G."/>
            <person name="Wedler H."/>
            <person name="Koehrer K."/>
            <person name="Ottenwaelder B."/>
            <person name="Poustka A."/>
            <person name="Wiemann S."/>
            <person name="Schupp I."/>
        </authorList>
    </citation>
    <scope>NUCLEOTIDE SEQUENCE [LARGE SCALE MRNA] OF 964-1651</scope>
    <source>
        <tissue>Fetal kidney</tissue>
    </source>
</reference>
<reference key="7">
    <citation type="journal article" date="2004" name="J. Med. Genet.">
        <title>Identification of the gene for Nance-Horan syndrome (NHS).</title>
        <authorList>
            <person name="Brooks S.P."/>
            <person name="Ebenezer N.D."/>
            <person name="Poopalasundaram S."/>
            <person name="Lehmann O.J."/>
            <person name="Moore A.T."/>
            <person name="Hardcastle A.J."/>
        </authorList>
    </citation>
    <scope>TISSUE SPECIFICITY</scope>
    <scope>INVOLVEMENT IN NANCE-HORAN SYNDROME</scope>
</reference>
<reference key="8">
    <citation type="journal article" date="2006" name="Nat. Biotechnol.">
        <title>A probability-based approach for high-throughput protein phosphorylation analysis and site localization.</title>
        <authorList>
            <person name="Beausoleil S.A."/>
            <person name="Villen J."/>
            <person name="Gerber S.A."/>
            <person name="Rush J."/>
            <person name="Gygi S.P."/>
        </authorList>
    </citation>
    <scope>IDENTIFICATION BY MASS SPECTROMETRY [LARGE SCALE ANALYSIS]</scope>
    <source>
        <tissue>Cervix carcinoma</tissue>
    </source>
</reference>
<reference key="9">
    <citation type="journal article" date="2008" name="Proc. Natl. Acad. Sci. U.S.A.">
        <title>A quantitative atlas of mitotic phosphorylation.</title>
        <authorList>
            <person name="Dephoure N."/>
            <person name="Zhou C."/>
            <person name="Villen J."/>
            <person name="Beausoleil S.A."/>
            <person name="Bakalarski C.E."/>
            <person name="Elledge S.J."/>
            <person name="Gygi S.P."/>
        </authorList>
    </citation>
    <scope>PHOSPHORYLATION [LARGE SCALE ANALYSIS] AT THR-401; SER-1176; THR-1262; SER-1329 AND SER-1499</scope>
    <scope>IDENTIFICATION BY MASS SPECTROMETRY [LARGE SCALE ANALYSIS]</scope>
    <source>
        <tissue>Cervix carcinoma</tissue>
    </source>
</reference>
<reference key="10">
    <citation type="journal article" date="2009" name="Exp. Cell Res.">
        <title>NHS-A isoform of the NHS gene is a novel interactor of ZO-1.</title>
        <authorList>
            <person name="Sharma S."/>
            <person name="Koh K.S."/>
            <person name="Collin C."/>
            <person name="Dave A."/>
            <person name="McMellon A."/>
            <person name="Sugiyama Y."/>
            <person name="McAvoy J.W."/>
            <person name="Voss A.K."/>
            <person name="Gecz J."/>
            <person name="Craig J.E."/>
        </authorList>
    </citation>
    <scope>SUBCELLULAR LOCATION</scope>
    <scope>INTERACTION WITH TJP1/ZO-1</scope>
</reference>
<reference key="11">
    <citation type="journal article" date="2009" name="Hum. Mol. Genet.">
        <title>X-linked cataract and Nance-Horan syndrome are allelic disorders.</title>
        <authorList>
            <person name="Coccia M."/>
            <person name="Brooks S.P."/>
            <person name="Webb T.R."/>
            <person name="Christodoulou K."/>
            <person name="Wozniak I.O."/>
            <person name="Murday V."/>
            <person name="Balicki M."/>
            <person name="Yee H.A."/>
            <person name="Wangensteen T."/>
            <person name="Riise R."/>
            <person name="Saggar A.K."/>
            <person name="Park S.M."/>
            <person name="Kanuga N."/>
            <person name="Francis P.J."/>
            <person name="Maher E.R."/>
            <person name="Moore A.T."/>
            <person name="Russell-Eggitt I.M."/>
            <person name="Hardcastle A.J."/>
        </authorList>
    </citation>
    <scope>INVOLVEMENT IN CTRCT40</scope>
</reference>
<reference key="12">
    <citation type="journal article" date="2010" name="Hum. Mol. Genet.">
        <title>The Nance-Horan syndrome protein encodes a functional WAVE homology domain (WHD) and is important for co-ordinating actin remodelling and maintaining cell morphology.</title>
        <authorList>
            <person name="Brooks S.P."/>
            <person name="Coccia M."/>
            <person name="Tang H.R."/>
            <person name="Kanuga N."/>
            <person name="Machesky L.M."/>
            <person name="Bailly M."/>
            <person name="Cheetham M.E."/>
            <person name="Hardcastle A.J."/>
        </authorList>
    </citation>
    <scope>FUNCTION</scope>
    <scope>SUBUNIT</scope>
    <scope>SUBCELLULAR LOCATION</scope>
</reference>
<reference key="13">
    <citation type="journal article" date="2013" name="J. Proteome Res.">
        <title>Toward a comprehensive characterization of a human cancer cell phosphoproteome.</title>
        <authorList>
            <person name="Zhou H."/>
            <person name="Di Palma S."/>
            <person name="Preisinger C."/>
            <person name="Peng M."/>
            <person name="Polat A.N."/>
            <person name="Heck A.J."/>
            <person name="Mohammed S."/>
        </authorList>
    </citation>
    <scope>PHOSPHORYLATION [LARGE SCALE ANALYSIS] AT THR-332; THR-401; SER-415; SER-533 AND SER-739</scope>
    <scope>IDENTIFICATION BY MASS SPECTROMETRY [LARGE SCALE ANALYSIS]</scope>
    <source>
        <tissue>Cervix carcinoma</tissue>
    </source>
</reference>
<reference key="14">
    <citation type="journal article" date="2006" name="Science">
        <title>The consensus coding sequences of human breast and colorectal cancers.</title>
        <authorList>
            <person name="Sjoeblom T."/>
            <person name="Jones S."/>
            <person name="Wood L.D."/>
            <person name="Parsons D.W."/>
            <person name="Lin J."/>
            <person name="Barber T.D."/>
            <person name="Mandelker D."/>
            <person name="Leary R.J."/>
            <person name="Ptak J."/>
            <person name="Silliman N."/>
            <person name="Szabo S."/>
            <person name="Buckhaults P."/>
            <person name="Farrell C."/>
            <person name="Meeh P."/>
            <person name="Markowitz S.D."/>
            <person name="Willis J."/>
            <person name="Dawson D."/>
            <person name="Willson J.K.V."/>
            <person name="Gazdar A.F."/>
            <person name="Hartigan J."/>
            <person name="Wu L."/>
            <person name="Liu C."/>
            <person name="Parmigiani G."/>
            <person name="Park B.H."/>
            <person name="Bachman K.E."/>
            <person name="Papadopoulos N."/>
            <person name="Vogelstein B."/>
            <person name="Kinzler K.W."/>
            <person name="Velculescu V.E."/>
        </authorList>
    </citation>
    <scope>VARIANT [LARGE SCALE ANALYSIS] THR-865</scope>
</reference>
<reference key="15">
    <citation type="journal article" date="2012" name="Transl. Psychiatry">
        <title>Analysis of the chromosome X exome in patients with autism spectrum disorders identified novel candidate genes, including TMLHE.</title>
        <authorList>
            <person name="Nava C."/>
            <person name="Lamari F."/>
            <person name="Heron D."/>
            <person name="Mignot C."/>
            <person name="Rastetter A."/>
            <person name="Keren B."/>
            <person name="Cohen D."/>
            <person name="Faudet A."/>
            <person name="Bouteiller D."/>
            <person name="Gilleron M."/>
            <person name="Jacquette A."/>
            <person name="Whalen S."/>
            <person name="Afenjar A."/>
            <person name="Perisse D."/>
            <person name="Laurent C."/>
            <person name="Dupuits C."/>
            <person name="Gautier C."/>
            <person name="Gerard M."/>
            <person name="Huguet G."/>
            <person name="Caillet S."/>
            <person name="Leheup B."/>
            <person name="Leboyer M."/>
            <person name="Gillberg C."/>
            <person name="Delorme R."/>
            <person name="Bourgeron T."/>
            <person name="Brice A."/>
            <person name="Depienne C."/>
        </authorList>
    </citation>
    <scope>VARIANT PRO-1628</scope>
</reference>
<reference key="16">
    <citation type="journal article" date="2016" name="J. Med. Genet.">
        <title>Homozygous missense mutation in the LMAN2L gene segregates with intellectual disability in a large consanguineous Pakistani family.</title>
        <authorList>
            <person name="Rafiullah R."/>
            <person name="Aslamkhan M."/>
            <person name="Paramasivam N."/>
            <person name="Thiel C."/>
            <person name="Mustafa G."/>
            <person name="Wiemann S."/>
            <person name="Schlesner M."/>
            <person name="Wade R.C."/>
            <person name="Rappold G.A."/>
            <person name="Berkel S."/>
        </authorList>
    </citation>
    <scope>VARIANT CYS-583</scope>
</reference>
<proteinExistence type="evidence at protein level"/>
<organism>
    <name type="scientific">Homo sapiens</name>
    <name type="common">Human</name>
    <dbReference type="NCBI Taxonomy" id="9606"/>
    <lineage>
        <taxon>Eukaryota</taxon>
        <taxon>Metazoa</taxon>
        <taxon>Chordata</taxon>
        <taxon>Craniata</taxon>
        <taxon>Vertebrata</taxon>
        <taxon>Euteleostomi</taxon>
        <taxon>Mammalia</taxon>
        <taxon>Eutheria</taxon>
        <taxon>Euarchontoglires</taxon>
        <taxon>Primates</taxon>
        <taxon>Haplorrhini</taxon>
        <taxon>Catarrhini</taxon>
        <taxon>Hominidae</taxon>
        <taxon>Homo</taxon>
    </lineage>
</organism>